<proteinExistence type="inferred from homology"/>
<reference key="1">
    <citation type="submission" date="1993-07" db="EMBL/GenBank/DDBJ databases">
        <authorList>
            <person name="Rochepeau P."/>
            <person name="Fellay R."/>
            <person name="Broughton W.J."/>
        </authorList>
    </citation>
    <scope>NUCLEOTIDE SEQUENCE [GENOMIC DNA]</scope>
</reference>
<reference key="2">
    <citation type="journal article" date="1997" name="Nature">
        <title>Molecular basis of symbiosis between Rhizobium and legumes.</title>
        <authorList>
            <person name="Freiberg C.A."/>
            <person name="Fellay R."/>
            <person name="Bairoch A."/>
            <person name="Broughton W.J."/>
            <person name="Rosenthal A."/>
            <person name="Perret X."/>
        </authorList>
    </citation>
    <scope>NUCLEOTIDE SEQUENCE [LARGE SCALE GENOMIC DNA]</scope>
    <source>
        <strain>NBRC 101917 / NGR234</strain>
    </source>
</reference>
<reference key="3">
    <citation type="journal article" date="2009" name="Appl. Environ. Microbiol.">
        <title>Rhizobium sp. strain NGR234 possesses a remarkable number of secretion systems.</title>
        <authorList>
            <person name="Schmeisser C."/>
            <person name="Liesegang H."/>
            <person name="Krysciak D."/>
            <person name="Bakkou N."/>
            <person name="Le Quere A."/>
            <person name="Wollherr A."/>
            <person name="Heinemeyer I."/>
            <person name="Morgenstern B."/>
            <person name="Pommerening-Roeser A."/>
            <person name="Flores M."/>
            <person name="Palacios R."/>
            <person name="Brenner S."/>
            <person name="Gottschalk G."/>
            <person name="Schmitz R.A."/>
            <person name="Broughton W.J."/>
            <person name="Perret X."/>
            <person name="Strittmatter A.W."/>
            <person name="Streit W.R."/>
        </authorList>
    </citation>
    <scope>NUCLEOTIDE SEQUENCE [LARGE SCALE GENOMIC DNA]</scope>
    <source>
        <strain>NBRC 101917 / NGR234</strain>
    </source>
</reference>
<feature type="chain" id="PRO_0000200853" description="Uncharacterized protein y4hP">
    <location>
        <begin position="1"/>
        <end position="552"/>
    </location>
</feature>
<feature type="sequence conflict" description="In Ref. 1; CAA52197." evidence="1" ref="1">
    <original>R</original>
    <variation>S</variation>
    <location>
        <position position="62"/>
    </location>
</feature>
<feature type="sequence conflict" description="In Ref. 1; CAA52197." evidence="1" ref="1">
    <original>R</original>
    <variation>S</variation>
    <location>
        <position position="104"/>
    </location>
</feature>
<feature type="sequence conflict" description="In Ref. 1; CAA52197." evidence="1" ref="1">
    <original>R</original>
    <variation>G</variation>
    <location>
        <position position="118"/>
    </location>
</feature>
<geneLocation type="plasmid">
    <name>sym pNGR234a</name>
</geneLocation>
<comment type="similarity">
    <text evidence="1">Belongs to the transposase 25 family.</text>
</comment>
<comment type="sequence caution" evidence="1">
    <conflict type="frameshift">
        <sequence resource="EMBL-CDS" id="CAA52197"/>
    </conflict>
</comment>
<sequence>MISKPVDLPVDVVGAYLALRGEHEALQAKHAIAVAEAANAQAMLSDNEALIVALELKIEKLRRELRGQRSERTARLLDQLELQLEELVAAATEDEVAAQAASARTSSVRSFTRKRPVRKPWPDDIERERVVIEPPTTCTCCGGSRLSKLGEDVTETLEEIPRRFKVIETVREKFTCRDCEAISQTPAPFHATPRGFIGPNLLATILFDKFGMHSPLNRQSARFKCEGIDLSTSTLADQVGYATAALMPVFDLIEAHVFAAERLHGDDTTIPIQARDKCTTGRIWTYVCDDRPFGGTAPPAAIYYASSDRRGEHPQKHLAGYGGILQSDCYNGFEPIAVAATKAVPITFAFCHAHARRKFFELADIQKNARDRKRRGKPISPIALEAVKRYDELFEIERQINGLSAEERLAVRQEKSKPLFDDMHEWLTKERAMLSRSSEVIEPIDYMLKRWEGFALFLKDGRVCLTNNAAERALRSVALGRRNWTFAGSQRGADRAAVMLTVITTCRLNDIDPKAWLADVLARIADHPVTRLYELLPWEWKRASAATVMLAA</sequence>
<protein>
    <recommendedName>
        <fullName>Uncharacterized protein y4hP</fullName>
    </recommendedName>
</protein>
<accession>P50360</accession>
<name>Y4HP_SINFN</name>
<gene>
    <name type="ordered locus">NGR_a03340</name>
    <name type="ORF">y4hP</name>
</gene>
<keyword id="KW-0614">Plasmid</keyword>
<keyword id="KW-1185">Reference proteome</keyword>
<evidence type="ECO:0000305" key="1"/>
<dbReference type="EMBL" id="X74068">
    <property type="protein sequence ID" value="CAA52197.1"/>
    <property type="status" value="ALT_FRAME"/>
    <property type="molecule type" value="Genomic_DNA"/>
</dbReference>
<dbReference type="EMBL" id="U00090">
    <property type="protein sequence ID" value="AAB92454.1"/>
    <property type="molecule type" value="Genomic_DNA"/>
</dbReference>
<dbReference type="PIR" id="T10850">
    <property type="entry name" value="T10850"/>
</dbReference>
<dbReference type="RefSeq" id="NP_443892.1">
    <property type="nucleotide sequence ID" value="NC_000914.2"/>
</dbReference>
<dbReference type="RefSeq" id="WP_010875348.1">
    <property type="nucleotide sequence ID" value="NC_000914.2"/>
</dbReference>
<dbReference type="RefSeq" id="YP_002826289.1">
    <property type="nucleotide sequence ID" value="NC_012587.1"/>
</dbReference>
<dbReference type="SMR" id="P50360"/>
<dbReference type="STRING" id="394.NGR_c17720"/>
<dbReference type="KEGG" id="rhi:NGR_a03340"/>
<dbReference type="eggNOG" id="COG4372">
    <property type="taxonomic scope" value="Bacteria"/>
</dbReference>
<dbReference type="HOGENOM" id="CLU_023034_0_1_5"/>
<dbReference type="OrthoDB" id="9800877at2"/>
<dbReference type="Proteomes" id="UP000001054">
    <property type="component" value="Plasmid pNGR234a"/>
</dbReference>
<dbReference type="InterPro" id="IPR039552">
    <property type="entry name" value="IS66_C"/>
</dbReference>
<dbReference type="InterPro" id="IPR052344">
    <property type="entry name" value="Transposase-related"/>
</dbReference>
<dbReference type="InterPro" id="IPR004291">
    <property type="entry name" value="Transposase_IS66_central"/>
</dbReference>
<dbReference type="InterPro" id="IPR024463">
    <property type="entry name" value="Transposase_TnpC_homeodom"/>
</dbReference>
<dbReference type="InterPro" id="IPR024474">
    <property type="entry name" value="Znf_dom_IS66"/>
</dbReference>
<dbReference type="NCBIfam" id="NF033517">
    <property type="entry name" value="transpos_IS66"/>
    <property type="match status" value="1"/>
</dbReference>
<dbReference type="PANTHER" id="PTHR33678">
    <property type="entry name" value="BLL1576 PROTEIN"/>
    <property type="match status" value="1"/>
</dbReference>
<dbReference type="PANTHER" id="PTHR33678:SF1">
    <property type="entry name" value="BLL1576 PROTEIN"/>
    <property type="match status" value="1"/>
</dbReference>
<dbReference type="Pfam" id="PF03050">
    <property type="entry name" value="DDE_Tnp_IS66"/>
    <property type="match status" value="1"/>
</dbReference>
<dbReference type="Pfam" id="PF13817">
    <property type="entry name" value="DDE_Tnp_IS66_C"/>
    <property type="match status" value="1"/>
</dbReference>
<dbReference type="Pfam" id="PF13007">
    <property type="entry name" value="LZ_Tnp_IS66"/>
    <property type="match status" value="1"/>
</dbReference>
<dbReference type="Pfam" id="PF13005">
    <property type="entry name" value="zf-IS66"/>
    <property type="match status" value="1"/>
</dbReference>
<organism>
    <name type="scientific">Sinorhizobium fredii (strain NBRC 101917 / NGR234)</name>
    <dbReference type="NCBI Taxonomy" id="394"/>
    <lineage>
        <taxon>Bacteria</taxon>
        <taxon>Pseudomonadati</taxon>
        <taxon>Pseudomonadota</taxon>
        <taxon>Alphaproteobacteria</taxon>
        <taxon>Hyphomicrobiales</taxon>
        <taxon>Rhizobiaceae</taxon>
        <taxon>Sinorhizobium/Ensifer group</taxon>
        <taxon>Sinorhizobium</taxon>
    </lineage>
</organism>